<organism>
    <name type="scientific">Lachnoclostridium phytofermentans (strain ATCC 700394 / DSM 18823 / ISDg)</name>
    <name type="common">Clostridium phytofermentans</name>
    <dbReference type="NCBI Taxonomy" id="357809"/>
    <lineage>
        <taxon>Bacteria</taxon>
        <taxon>Bacillati</taxon>
        <taxon>Bacillota</taxon>
        <taxon>Clostridia</taxon>
        <taxon>Lachnospirales</taxon>
        <taxon>Lachnospiraceae</taxon>
    </lineage>
</organism>
<gene>
    <name evidence="1" type="primary">mnmA</name>
    <name type="ordered locus">Cphy_2905</name>
</gene>
<name>MNMA_LACP7</name>
<dbReference type="EC" id="2.8.1.13" evidence="1"/>
<dbReference type="EMBL" id="CP000885">
    <property type="protein sequence ID" value="ABX43263.1"/>
    <property type="molecule type" value="Genomic_DNA"/>
</dbReference>
<dbReference type="RefSeq" id="WP_012200914.1">
    <property type="nucleotide sequence ID" value="NC_010001.1"/>
</dbReference>
<dbReference type="SMR" id="A9KPI9"/>
<dbReference type="STRING" id="357809.Cphy_2905"/>
<dbReference type="KEGG" id="cpy:Cphy_2905"/>
<dbReference type="eggNOG" id="COG0482">
    <property type="taxonomic scope" value="Bacteria"/>
</dbReference>
<dbReference type="HOGENOM" id="CLU_035188_0_0_9"/>
<dbReference type="OrthoDB" id="9800696at2"/>
<dbReference type="Proteomes" id="UP000000370">
    <property type="component" value="Chromosome"/>
</dbReference>
<dbReference type="GO" id="GO:0005737">
    <property type="term" value="C:cytoplasm"/>
    <property type="evidence" value="ECO:0007669"/>
    <property type="project" value="UniProtKB-SubCell"/>
</dbReference>
<dbReference type="GO" id="GO:0005524">
    <property type="term" value="F:ATP binding"/>
    <property type="evidence" value="ECO:0007669"/>
    <property type="project" value="UniProtKB-KW"/>
</dbReference>
<dbReference type="GO" id="GO:0000049">
    <property type="term" value="F:tRNA binding"/>
    <property type="evidence" value="ECO:0007669"/>
    <property type="project" value="UniProtKB-KW"/>
</dbReference>
<dbReference type="GO" id="GO:0103016">
    <property type="term" value="F:tRNA-uridine 2-sulfurtransferase activity"/>
    <property type="evidence" value="ECO:0007669"/>
    <property type="project" value="UniProtKB-EC"/>
</dbReference>
<dbReference type="GO" id="GO:0002143">
    <property type="term" value="P:tRNA wobble position uridine thiolation"/>
    <property type="evidence" value="ECO:0007669"/>
    <property type="project" value="TreeGrafter"/>
</dbReference>
<dbReference type="CDD" id="cd01998">
    <property type="entry name" value="MnmA_TRMU-like"/>
    <property type="match status" value="1"/>
</dbReference>
<dbReference type="FunFam" id="2.30.30.280:FF:000001">
    <property type="entry name" value="tRNA-specific 2-thiouridylase MnmA"/>
    <property type="match status" value="1"/>
</dbReference>
<dbReference type="FunFam" id="2.40.30.10:FF:000023">
    <property type="entry name" value="tRNA-specific 2-thiouridylase MnmA"/>
    <property type="match status" value="1"/>
</dbReference>
<dbReference type="FunFam" id="3.40.50.620:FF:000115">
    <property type="entry name" value="tRNA-specific 2-thiouridylase MnmA"/>
    <property type="match status" value="1"/>
</dbReference>
<dbReference type="Gene3D" id="2.30.30.280">
    <property type="entry name" value="Adenine nucleotide alpha hydrolases-like domains"/>
    <property type="match status" value="1"/>
</dbReference>
<dbReference type="Gene3D" id="3.40.50.620">
    <property type="entry name" value="HUPs"/>
    <property type="match status" value="1"/>
</dbReference>
<dbReference type="Gene3D" id="2.40.30.10">
    <property type="entry name" value="Translation factors"/>
    <property type="match status" value="1"/>
</dbReference>
<dbReference type="HAMAP" id="MF_00144">
    <property type="entry name" value="tRNA_thiouridyl_MnmA"/>
    <property type="match status" value="1"/>
</dbReference>
<dbReference type="InterPro" id="IPR004506">
    <property type="entry name" value="MnmA-like"/>
</dbReference>
<dbReference type="InterPro" id="IPR046885">
    <property type="entry name" value="MnmA-like_C"/>
</dbReference>
<dbReference type="InterPro" id="IPR046884">
    <property type="entry name" value="MnmA-like_central"/>
</dbReference>
<dbReference type="InterPro" id="IPR023382">
    <property type="entry name" value="MnmA-like_central_sf"/>
</dbReference>
<dbReference type="InterPro" id="IPR001763">
    <property type="entry name" value="Rhodanese-like_dom"/>
</dbReference>
<dbReference type="InterPro" id="IPR014729">
    <property type="entry name" value="Rossmann-like_a/b/a_fold"/>
</dbReference>
<dbReference type="NCBIfam" id="NF001138">
    <property type="entry name" value="PRK00143.1"/>
    <property type="match status" value="1"/>
</dbReference>
<dbReference type="NCBIfam" id="TIGR00420">
    <property type="entry name" value="trmU"/>
    <property type="match status" value="1"/>
</dbReference>
<dbReference type="PANTHER" id="PTHR11933:SF5">
    <property type="entry name" value="MITOCHONDRIAL TRNA-SPECIFIC 2-THIOURIDYLASE 1"/>
    <property type="match status" value="1"/>
</dbReference>
<dbReference type="PANTHER" id="PTHR11933">
    <property type="entry name" value="TRNA 5-METHYLAMINOMETHYL-2-THIOURIDYLATE -METHYLTRANSFERASE"/>
    <property type="match status" value="1"/>
</dbReference>
<dbReference type="Pfam" id="PF03054">
    <property type="entry name" value="tRNA_Me_trans"/>
    <property type="match status" value="1"/>
</dbReference>
<dbReference type="Pfam" id="PF20258">
    <property type="entry name" value="tRNA_Me_trans_C"/>
    <property type="match status" value="1"/>
</dbReference>
<dbReference type="Pfam" id="PF20259">
    <property type="entry name" value="tRNA_Me_trans_M"/>
    <property type="match status" value="1"/>
</dbReference>
<dbReference type="SUPFAM" id="SSF52402">
    <property type="entry name" value="Adenine nucleotide alpha hydrolases-like"/>
    <property type="match status" value="1"/>
</dbReference>
<sequence length="357" mass="39344">MKKVVVGMSGGVDSSVAAYLLKEAGYDVIGVTMQIWQDEDNQTVEENGGCCGLSAVDDARRVANSLDIPYYVMNFKSEFKANVMDYFVKEYQAGRTPNPCIACNRYVKWESLLTRSLQIGADYIATGHYARIVTLPNGRFALKKSATAAKDQTYALYNLTQDQLSKTLMPVGEYTKEEVREIAAKIGLLVANKPDSQEICFVPDNNYAGFIEDYTGQKIIPGNFVDTKGNILGRHQGIIHYTVGQRKGLGIALGRPAFVVEIRPETNEVVIGSNDDIFTDRLIANKLNAMAVEEFEDGMEVIAKIRYNHEGSKCTIRKVSDTEIACEFETPQRAVTPGQAVVFYQGDIVVGGGTIIK</sequence>
<protein>
    <recommendedName>
        <fullName evidence="1">tRNA-specific 2-thiouridylase MnmA</fullName>
        <ecNumber evidence="1">2.8.1.13</ecNumber>
    </recommendedName>
</protein>
<proteinExistence type="inferred from homology"/>
<comment type="function">
    <text evidence="1">Catalyzes the 2-thiolation of uridine at the wobble position (U34) of tRNA, leading to the formation of s(2)U34.</text>
</comment>
<comment type="catalytic activity">
    <reaction evidence="1">
        <text>S-sulfanyl-L-cysteinyl-[protein] + uridine(34) in tRNA + AH2 + ATP = 2-thiouridine(34) in tRNA + L-cysteinyl-[protein] + A + AMP + diphosphate + H(+)</text>
        <dbReference type="Rhea" id="RHEA:47032"/>
        <dbReference type="Rhea" id="RHEA-COMP:10131"/>
        <dbReference type="Rhea" id="RHEA-COMP:11726"/>
        <dbReference type="Rhea" id="RHEA-COMP:11727"/>
        <dbReference type="Rhea" id="RHEA-COMP:11728"/>
        <dbReference type="ChEBI" id="CHEBI:13193"/>
        <dbReference type="ChEBI" id="CHEBI:15378"/>
        <dbReference type="ChEBI" id="CHEBI:17499"/>
        <dbReference type="ChEBI" id="CHEBI:29950"/>
        <dbReference type="ChEBI" id="CHEBI:30616"/>
        <dbReference type="ChEBI" id="CHEBI:33019"/>
        <dbReference type="ChEBI" id="CHEBI:61963"/>
        <dbReference type="ChEBI" id="CHEBI:65315"/>
        <dbReference type="ChEBI" id="CHEBI:87170"/>
        <dbReference type="ChEBI" id="CHEBI:456215"/>
        <dbReference type="EC" id="2.8.1.13"/>
    </reaction>
</comment>
<comment type="subcellular location">
    <subcellularLocation>
        <location evidence="1">Cytoplasm</location>
    </subcellularLocation>
</comment>
<comment type="similarity">
    <text evidence="1">Belongs to the MnmA/TRMU family.</text>
</comment>
<accession>A9KPI9</accession>
<reference key="1">
    <citation type="submission" date="2007-11" db="EMBL/GenBank/DDBJ databases">
        <title>Complete genome sequence of Clostridium phytofermentans ISDg.</title>
        <authorList>
            <person name="Leschine S.B."/>
            <person name="Warnick T.A."/>
            <person name="Blanchard J.L."/>
            <person name="Schnell D.J."/>
            <person name="Petit E.L."/>
            <person name="LaTouf W.G."/>
            <person name="Copeland A."/>
            <person name="Lucas S."/>
            <person name="Lapidus A."/>
            <person name="Barry K."/>
            <person name="Glavina del Rio T."/>
            <person name="Dalin E."/>
            <person name="Tice H."/>
            <person name="Pitluck S."/>
            <person name="Kiss H."/>
            <person name="Brettin T."/>
            <person name="Bruce D."/>
            <person name="Detter J.C."/>
            <person name="Han C."/>
            <person name="Kuske C."/>
            <person name="Schmutz J."/>
            <person name="Larimer F."/>
            <person name="Land M."/>
            <person name="Hauser L."/>
            <person name="Kyrpides N."/>
            <person name="Kim E.A."/>
            <person name="Richardson P."/>
        </authorList>
    </citation>
    <scope>NUCLEOTIDE SEQUENCE [LARGE SCALE GENOMIC DNA]</scope>
    <source>
        <strain>ATCC 700394 / DSM 18823 / ISDg</strain>
    </source>
</reference>
<evidence type="ECO:0000255" key="1">
    <source>
        <dbReference type="HAMAP-Rule" id="MF_00144"/>
    </source>
</evidence>
<feature type="chain" id="PRO_0000349598" description="tRNA-specific 2-thiouridylase MnmA">
    <location>
        <begin position="1"/>
        <end position="357"/>
    </location>
</feature>
<feature type="region of interest" description="Interaction with tRNA" evidence="1">
    <location>
        <begin position="150"/>
        <end position="152"/>
    </location>
</feature>
<feature type="region of interest" description="Interaction with tRNA" evidence="1">
    <location>
        <begin position="306"/>
        <end position="307"/>
    </location>
</feature>
<feature type="active site" description="Nucleophile" evidence="1">
    <location>
        <position position="103"/>
    </location>
</feature>
<feature type="active site" description="Cysteine persulfide intermediate" evidence="1">
    <location>
        <position position="200"/>
    </location>
</feature>
<feature type="binding site" evidence="1">
    <location>
        <begin position="7"/>
        <end position="14"/>
    </location>
    <ligand>
        <name>ATP</name>
        <dbReference type="ChEBI" id="CHEBI:30616"/>
    </ligand>
</feature>
<feature type="binding site" evidence="1">
    <location>
        <position position="33"/>
    </location>
    <ligand>
        <name>ATP</name>
        <dbReference type="ChEBI" id="CHEBI:30616"/>
    </ligand>
</feature>
<feature type="binding site" evidence="1">
    <location>
        <position position="127"/>
    </location>
    <ligand>
        <name>ATP</name>
        <dbReference type="ChEBI" id="CHEBI:30616"/>
    </ligand>
</feature>
<feature type="site" description="Interaction with tRNA" evidence="1">
    <location>
        <position position="128"/>
    </location>
</feature>
<feature type="site" description="Interaction with tRNA" evidence="1">
    <location>
        <position position="339"/>
    </location>
</feature>
<feature type="disulfide bond" description="Alternate" evidence="1">
    <location>
        <begin position="103"/>
        <end position="200"/>
    </location>
</feature>
<keyword id="KW-0067">ATP-binding</keyword>
<keyword id="KW-0963">Cytoplasm</keyword>
<keyword id="KW-1015">Disulfide bond</keyword>
<keyword id="KW-0547">Nucleotide-binding</keyword>
<keyword id="KW-1185">Reference proteome</keyword>
<keyword id="KW-0694">RNA-binding</keyword>
<keyword id="KW-0808">Transferase</keyword>
<keyword id="KW-0819">tRNA processing</keyword>
<keyword id="KW-0820">tRNA-binding</keyword>